<organism>
    <name type="scientific">Loxosceles gaucho</name>
    <name type="common">Spider</name>
    <dbReference type="NCBI Taxonomy" id="58216"/>
    <lineage>
        <taxon>Eukaryota</taxon>
        <taxon>Metazoa</taxon>
        <taxon>Ecdysozoa</taxon>
        <taxon>Arthropoda</taxon>
        <taxon>Chelicerata</taxon>
        <taxon>Arachnida</taxon>
        <taxon>Araneae</taxon>
        <taxon>Araneomorphae</taxon>
        <taxon>Haplogynae</taxon>
        <taxon>Scytodoidea</taxon>
        <taxon>Sicariidae</taxon>
        <taxon>Loxosceles</taxon>
    </lineage>
</organism>
<reference key="1">
    <citation type="submission" date="2005-03" db="EMBL/GenBank/DDBJ databases">
        <title>Molecular cloning of a protein from the dermonecrotic family of Loxosceles gaucho spider venom.</title>
        <authorList>
            <person name="Silvestre F.G."/>
            <person name="Castro C.S."/>
            <person name="Chavez-Olortegui C."/>
            <person name="Kalapothakis E."/>
        </authorList>
    </citation>
    <scope>NUCLEOTIDE SEQUENCE [GENOMIC DNA]</scope>
    <source>
        <tissue>Venom gland</tissue>
    </source>
</reference>
<feature type="chain" id="PRO_0000279558" description="Dermonecrotic toxin LgSicTox-alphaIA1">
    <location>
        <begin position="1"/>
        <end position="280"/>
    </location>
</feature>
<feature type="active site" evidence="5">
    <location>
        <position position="12"/>
    </location>
</feature>
<feature type="active site" description="Nucleophile" evidence="5">
    <location>
        <position position="48"/>
    </location>
</feature>
<feature type="binding site" evidence="5">
    <location>
        <position position="32"/>
    </location>
    <ligand>
        <name>Mg(2+)</name>
        <dbReference type="ChEBI" id="CHEBI:18420"/>
    </ligand>
</feature>
<feature type="binding site" evidence="5">
    <location>
        <position position="34"/>
    </location>
    <ligand>
        <name>Mg(2+)</name>
        <dbReference type="ChEBI" id="CHEBI:18420"/>
    </ligand>
</feature>
<feature type="binding site" evidence="5">
    <location>
        <position position="92"/>
    </location>
    <ligand>
        <name>Mg(2+)</name>
        <dbReference type="ChEBI" id="CHEBI:18420"/>
    </ligand>
</feature>
<feature type="disulfide bond" evidence="5">
    <location>
        <begin position="52"/>
        <end position="58"/>
    </location>
</feature>
<sequence length="280" mass="31282">AGNRRPIWIMGHMVNAIGQIDEFVNLGANSIETDVSFDDNANPEYTYHGIPCDSGRNCKKYENFNDFLKGLRSATTPGNSKYQEKLVLVVFDLKTGSLYDNQANDAGKKWAKNLLQHYWNNGNNGGRAYIVLSIPDLNHYPLIKGFKDQLTKDGHPELMDKVGHDFSGNDDISDVGKAYKKAGITGHIWQSDGITNSLPRGLSRVNAAVANRDSANGFINKVYYWTVDKRSTTRDALDAGVDGIMTNYPDVITDVLNEAAYKKKFRVATYDDNPWVTFNK</sequence>
<name>A1H_LOXGA</name>
<evidence type="ECO:0000250" key="1">
    <source>
        <dbReference type="UniProtKB" id="A0A0D4WTV1"/>
    </source>
</evidence>
<evidence type="ECO:0000250" key="2">
    <source>
        <dbReference type="UniProtKB" id="A0A0D4WV12"/>
    </source>
</evidence>
<evidence type="ECO:0000250" key="3">
    <source>
        <dbReference type="UniProtKB" id="P0CE80"/>
    </source>
</evidence>
<evidence type="ECO:0000250" key="4">
    <source>
        <dbReference type="UniProtKB" id="Q4ZFU2"/>
    </source>
</evidence>
<evidence type="ECO:0000250" key="5">
    <source>
        <dbReference type="UniProtKB" id="Q8I914"/>
    </source>
</evidence>
<evidence type="ECO:0000305" key="6"/>
<evidence type="ECO:0000305" key="7">
    <source ref="1"/>
</evidence>
<accession>Q4VDB5</accession>
<protein>
    <recommendedName>
        <fullName>Dermonecrotic toxin LgSicTox-alphaIA1</fullName>
        <ecNumber evidence="4">4.6.1.-</ecNumber>
    </recommendedName>
    <alternativeName>
        <fullName>Phospholipase D</fullName>
        <shortName>PLD</shortName>
    </alternativeName>
    <alternativeName>
        <fullName>Sphingomyelin phosphodiesterase D 1</fullName>
        <shortName>SMD 1</shortName>
        <shortName>SMase D 1</shortName>
        <shortName>Sphingomyelinase D 1</shortName>
    </alternativeName>
</protein>
<dbReference type="EC" id="4.6.1.-" evidence="4"/>
<dbReference type="EMBL" id="AY974250">
    <property type="protein sequence ID" value="AAY42401.1"/>
    <property type="molecule type" value="Genomic_DNA"/>
</dbReference>
<dbReference type="SMR" id="Q4VDB5"/>
<dbReference type="ArachnoServer" id="AS000130">
    <property type="toxin name" value="Sphingomyelinase D (LgSicTox-alphaIA1)"/>
</dbReference>
<dbReference type="GO" id="GO:0005576">
    <property type="term" value="C:extracellular region"/>
    <property type="evidence" value="ECO:0007669"/>
    <property type="project" value="UniProtKB-SubCell"/>
</dbReference>
<dbReference type="GO" id="GO:0016829">
    <property type="term" value="F:lyase activity"/>
    <property type="evidence" value="ECO:0007669"/>
    <property type="project" value="UniProtKB-KW"/>
</dbReference>
<dbReference type="GO" id="GO:0046872">
    <property type="term" value="F:metal ion binding"/>
    <property type="evidence" value="ECO:0007669"/>
    <property type="project" value="UniProtKB-KW"/>
</dbReference>
<dbReference type="GO" id="GO:0008081">
    <property type="term" value="F:phosphoric diester hydrolase activity"/>
    <property type="evidence" value="ECO:0007669"/>
    <property type="project" value="InterPro"/>
</dbReference>
<dbReference type="GO" id="GO:0090729">
    <property type="term" value="F:toxin activity"/>
    <property type="evidence" value="ECO:0007669"/>
    <property type="project" value="UniProtKB-KW"/>
</dbReference>
<dbReference type="GO" id="GO:0031640">
    <property type="term" value="P:killing of cells of another organism"/>
    <property type="evidence" value="ECO:0007669"/>
    <property type="project" value="UniProtKB-KW"/>
</dbReference>
<dbReference type="GO" id="GO:0016042">
    <property type="term" value="P:lipid catabolic process"/>
    <property type="evidence" value="ECO:0007669"/>
    <property type="project" value="UniProtKB-KW"/>
</dbReference>
<dbReference type="CDD" id="cd08576">
    <property type="entry name" value="GDPD_like_SMaseD_PLD"/>
    <property type="match status" value="1"/>
</dbReference>
<dbReference type="Gene3D" id="3.20.20.190">
    <property type="entry name" value="Phosphatidylinositol (PI) phosphodiesterase"/>
    <property type="match status" value="1"/>
</dbReference>
<dbReference type="InterPro" id="IPR017946">
    <property type="entry name" value="PLC-like_Pdiesterase_TIM-brl"/>
</dbReference>
<dbReference type="Pfam" id="PF13653">
    <property type="entry name" value="GDPD_2"/>
    <property type="match status" value="1"/>
</dbReference>
<dbReference type="SUPFAM" id="SSF51695">
    <property type="entry name" value="PLC-like phosphodiesterases"/>
    <property type="match status" value="1"/>
</dbReference>
<proteinExistence type="inferred from homology"/>
<keyword id="KW-0204">Cytolysis</keyword>
<keyword id="KW-1061">Dermonecrotic toxin</keyword>
<keyword id="KW-1015">Disulfide bond</keyword>
<keyword id="KW-0354">Hemolysis</keyword>
<keyword id="KW-0442">Lipid degradation</keyword>
<keyword id="KW-0443">Lipid metabolism</keyword>
<keyword id="KW-0456">Lyase</keyword>
<keyword id="KW-0460">Magnesium</keyword>
<keyword id="KW-0479">Metal-binding</keyword>
<keyword id="KW-0964">Secreted</keyword>
<keyword id="KW-0800">Toxin</keyword>
<comment type="function">
    <text evidence="1 3">Dermonecrotic toxins cleave the phosphodiester linkage between the phosphate and headgroup of certain phospholipids (sphingolipid and lysolipid substrates), forming an alcohol (often choline) and a cyclic phosphate (By similarity). This toxin acts on sphingomyelin (SM) (By similarity). It may also act on ceramide phosphoethanolamine (CPE), lysophosphatidylcholine (LPC) and lysophosphatidylethanolamine (LPE), but not on lysophosphatidylserine (LPS), and lysophosphatidylglycerol (LPG) (By similarity). It acts by transphosphatidylation, releasing exclusively cyclic phosphate products as second products (By similarity). Induces dermonecrosis, hemolysis, increased vascular permeability, edema, inflammatory response, and platelet aggregation (By similarity).</text>
</comment>
<comment type="catalytic activity">
    <reaction evidence="1">
        <text>an N-(acyl)-sphingosylphosphocholine = an N-(acyl)-sphingosyl-1,3-cyclic phosphate + choline</text>
        <dbReference type="Rhea" id="RHEA:60652"/>
        <dbReference type="ChEBI" id="CHEBI:15354"/>
        <dbReference type="ChEBI" id="CHEBI:64583"/>
        <dbReference type="ChEBI" id="CHEBI:143892"/>
    </reaction>
</comment>
<comment type="catalytic activity">
    <reaction evidence="1">
        <text>an N-(acyl)-sphingosylphosphoethanolamine = an N-(acyl)-sphingosyl-1,3-cyclic phosphate + ethanolamine</text>
        <dbReference type="Rhea" id="RHEA:60648"/>
        <dbReference type="ChEBI" id="CHEBI:57603"/>
        <dbReference type="ChEBI" id="CHEBI:143891"/>
        <dbReference type="ChEBI" id="CHEBI:143892"/>
    </reaction>
</comment>
<comment type="catalytic activity">
    <reaction evidence="1">
        <text>a 1-acyl-sn-glycero-3-phosphocholine = a 1-acyl-sn-glycero-2,3-cyclic phosphate + choline</text>
        <dbReference type="Rhea" id="RHEA:60700"/>
        <dbReference type="ChEBI" id="CHEBI:15354"/>
        <dbReference type="ChEBI" id="CHEBI:58168"/>
        <dbReference type="ChEBI" id="CHEBI:143947"/>
    </reaction>
</comment>
<comment type="catalytic activity">
    <reaction evidence="1">
        <text>a 1-acyl-sn-glycero-3-phosphoethanolamine = a 1-acyl-sn-glycero-2,3-cyclic phosphate + ethanolamine</text>
        <dbReference type="Rhea" id="RHEA:60704"/>
        <dbReference type="ChEBI" id="CHEBI:57603"/>
        <dbReference type="ChEBI" id="CHEBI:64381"/>
        <dbReference type="ChEBI" id="CHEBI:143947"/>
    </reaction>
</comment>
<comment type="cofactor">
    <cofactor evidence="5">
        <name>Mg(2+)</name>
        <dbReference type="ChEBI" id="CHEBI:18420"/>
    </cofactor>
    <text evidence="5">Binds 1 Mg(2+) ion per subunit.</text>
</comment>
<comment type="subcellular location">
    <subcellularLocation>
        <location evidence="7">Secreted</location>
    </subcellularLocation>
</comment>
<comment type="tissue specificity">
    <text evidence="7">Expressed by the venom gland.</text>
</comment>
<comment type="similarity">
    <text evidence="6">Belongs to the arthropod phospholipase D family. Class I subfamily.</text>
</comment>
<comment type="caution">
    <text evidence="1 2 4">The most common activity assay for dermonecrotic toxins detects enzymatic activity by monitoring choline release from substrate. Liberation of choline from sphingomyelin (SM) or lysophosphatidylcholine (LPC) is commonly assumed to result from substrate hydrolysis, giving either ceramide-1-phosphate (C1P) or lysophosphatidic acid (LPA), respectively, as a second product. However, two studies from Lajoie and colleagues (2013 and 2015) report the observation of exclusive formation of cyclic phosphate products as second products, resulting from intramolecular transphosphatidylation. Cyclic phosphates have vastly different biological properties from their monoester counterparts, and they may be relevant to the pathology of brown spider envenomation.</text>
</comment>